<protein>
    <recommendedName>
        <fullName>Probable transporter MCH1</fullName>
    </recommendedName>
</protein>
<sequence>MALSSIEHYLSYHLRVLLPQVLSSKSSHNIAYIFALFAAITSGFVSLISLYAQPWQEHLSYSSWQINMIVTVINMGMYLTPPILGIIADIHGPITLSLSSVLGFIPSYAYLAYTFHRDHSFTNESDGSFTPTLVCFFIIGVATSGLYFSALITCAKLFPGTKLLSISIPTTCYGLSSLIGSQFLRVKYFHPVDYPYLDLGRVFKAFAWIYTVIGVMIWIATSKVAQIQHEADIMEEQDRMAEPSDNDVENHYDDNEQSRLLHATHAQQMTLMKVFRDPVLYIFGATIFCALGPLEMFIANMGSLTNVLAGGHEPAMSSALLSIYALTSTLTRLGTGLTVDYFNKRQLSVKWILLLFLVVGLVTQGKIYMLSMSSLDHSHMVTINRKLFYIGIMQGIAYGGLFTIYPTITLMVWGEKMFGTAYGTLMIAPALGSALSCLIYADVYDSECANSTTRSCIAPVYETTALEFCAAILLTVVVTVLWRKRRTHI</sequence>
<keyword id="KW-0325">Glycoprotein</keyword>
<keyword id="KW-0472">Membrane</keyword>
<keyword id="KW-1185">Reference proteome</keyword>
<keyword id="KW-0812">Transmembrane</keyword>
<keyword id="KW-1133">Transmembrane helix</keyword>
<keyword id="KW-0813">Transport</keyword>
<keyword id="KW-0926">Vacuole</keyword>
<name>MCH1_CANGA</name>
<gene>
    <name type="primary">MCH1</name>
    <name type="ordered locus">CAGL0D01056g</name>
</gene>
<accession>Q6FWD4</accession>
<evidence type="ECO:0000250" key="1"/>
<evidence type="ECO:0000255" key="2"/>
<evidence type="ECO:0000305" key="3"/>
<comment type="function">
    <text evidence="1">Probable transporter.</text>
</comment>
<comment type="subcellular location">
    <subcellularLocation>
        <location evidence="1">Vacuole membrane</location>
        <topology evidence="1">Multi-pass membrane protein</topology>
    </subcellularLocation>
</comment>
<comment type="similarity">
    <text evidence="3">Belongs to the major facilitator superfamily.</text>
</comment>
<organism>
    <name type="scientific">Candida glabrata (strain ATCC 2001 / BCRC 20586 / JCM 3761 / NBRC 0622 / NRRL Y-65 / CBS 138)</name>
    <name type="common">Yeast</name>
    <name type="synonym">Nakaseomyces glabratus</name>
    <dbReference type="NCBI Taxonomy" id="284593"/>
    <lineage>
        <taxon>Eukaryota</taxon>
        <taxon>Fungi</taxon>
        <taxon>Dikarya</taxon>
        <taxon>Ascomycota</taxon>
        <taxon>Saccharomycotina</taxon>
        <taxon>Saccharomycetes</taxon>
        <taxon>Saccharomycetales</taxon>
        <taxon>Saccharomycetaceae</taxon>
        <taxon>Nakaseomyces</taxon>
    </lineage>
</organism>
<reference key="1">
    <citation type="journal article" date="2004" name="Nature">
        <title>Genome evolution in yeasts.</title>
        <authorList>
            <person name="Dujon B."/>
            <person name="Sherman D."/>
            <person name="Fischer G."/>
            <person name="Durrens P."/>
            <person name="Casaregola S."/>
            <person name="Lafontaine I."/>
            <person name="de Montigny J."/>
            <person name="Marck C."/>
            <person name="Neuveglise C."/>
            <person name="Talla E."/>
            <person name="Goffard N."/>
            <person name="Frangeul L."/>
            <person name="Aigle M."/>
            <person name="Anthouard V."/>
            <person name="Babour A."/>
            <person name="Barbe V."/>
            <person name="Barnay S."/>
            <person name="Blanchin S."/>
            <person name="Beckerich J.-M."/>
            <person name="Beyne E."/>
            <person name="Bleykasten C."/>
            <person name="Boisrame A."/>
            <person name="Boyer J."/>
            <person name="Cattolico L."/>
            <person name="Confanioleri F."/>
            <person name="de Daruvar A."/>
            <person name="Despons L."/>
            <person name="Fabre E."/>
            <person name="Fairhead C."/>
            <person name="Ferry-Dumazet H."/>
            <person name="Groppi A."/>
            <person name="Hantraye F."/>
            <person name="Hennequin C."/>
            <person name="Jauniaux N."/>
            <person name="Joyet P."/>
            <person name="Kachouri R."/>
            <person name="Kerrest A."/>
            <person name="Koszul R."/>
            <person name="Lemaire M."/>
            <person name="Lesur I."/>
            <person name="Ma L."/>
            <person name="Muller H."/>
            <person name="Nicaud J.-M."/>
            <person name="Nikolski M."/>
            <person name="Oztas S."/>
            <person name="Ozier-Kalogeropoulos O."/>
            <person name="Pellenz S."/>
            <person name="Potier S."/>
            <person name="Richard G.-F."/>
            <person name="Straub M.-L."/>
            <person name="Suleau A."/>
            <person name="Swennen D."/>
            <person name="Tekaia F."/>
            <person name="Wesolowski-Louvel M."/>
            <person name="Westhof E."/>
            <person name="Wirth B."/>
            <person name="Zeniou-Meyer M."/>
            <person name="Zivanovic Y."/>
            <person name="Bolotin-Fukuhara M."/>
            <person name="Thierry A."/>
            <person name="Bouchier C."/>
            <person name="Caudron B."/>
            <person name="Scarpelli C."/>
            <person name="Gaillardin C."/>
            <person name="Weissenbach J."/>
            <person name="Wincker P."/>
            <person name="Souciet J.-L."/>
        </authorList>
    </citation>
    <scope>NUCLEOTIDE SEQUENCE [LARGE SCALE GENOMIC DNA]</scope>
    <source>
        <strain>ATCC 2001 / BCRC 20586 / JCM 3761 / NBRC 0622 / NRRL Y-65 / CBS 138</strain>
    </source>
</reference>
<feature type="chain" id="PRO_0000084869" description="Probable transporter MCH1">
    <location>
        <begin position="1"/>
        <end position="489"/>
    </location>
</feature>
<feature type="transmembrane region" description="Helical" evidence="2">
    <location>
        <begin position="30"/>
        <end position="50"/>
    </location>
</feature>
<feature type="transmembrane region" description="Helical" evidence="2">
    <location>
        <begin position="68"/>
        <end position="88"/>
    </location>
</feature>
<feature type="transmembrane region" description="Helical" evidence="2">
    <location>
        <begin position="92"/>
        <end position="112"/>
    </location>
</feature>
<feature type="transmembrane region" description="Helical" evidence="2">
    <location>
        <begin position="132"/>
        <end position="152"/>
    </location>
</feature>
<feature type="transmembrane region" description="Helical" evidence="2">
    <location>
        <begin position="163"/>
        <end position="183"/>
    </location>
</feature>
<feature type="transmembrane region" description="Helical" evidence="2">
    <location>
        <begin position="202"/>
        <end position="222"/>
    </location>
</feature>
<feature type="transmembrane region" description="Helical" evidence="2">
    <location>
        <begin position="279"/>
        <end position="299"/>
    </location>
</feature>
<feature type="transmembrane region" description="Helical" evidence="2">
    <location>
        <begin position="307"/>
        <end position="327"/>
    </location>
</feature>
<feature type="transmembrane region" description="Helical" evidence="2">
    <location>
        <begin position="351"/>
        <end position="371"/>
    </location>
</feature>
<feature type="transmembrane region" description="Helical" evidence="2">
    <location>
        <begin position="388"/>
        <end position="408"/>
    </location>
</feature>
<feature type="transmembrane region" description="Helical" evidence="2">
    <location>
        <begin position="421"/>
        <end position="441"/>
    </location>
</feature>
<feature type="transmembrane region" description="Helical" evidence="2">
    <location>
        <begin position="462"/>
        <end position="482"/>
    </location>
</feature>
<feature type="glycosylation site" description="N-linked (GlcNAc...) asparagine" evidence="2">
    <location>
        <position position="123"/>
    </location>
</feature>
<feature type="glycosylation site" description="N-linked (GlcNAc...) asparagine" evidence="2">
    <location>
        <position position="450"/>
    </location>
</feature>
<dbReference type="EMBL" id="CR380950">
    <property type="protein sequence ID" value="CAG58371.1"/>
    <property type="molecule type" value="Genomic_DNA"/>
</dbReference>
<dbReference type="RefSeq" id="XP_445460.1">
    <property type="nucleotide sequence ID" value="XM_445460.1"/>
</dbReference>
<dbReference type="FunCoup" id="Q6FWD4">
    <property type="interactions" value="31"/>
</dbReference>
<dbReference type="GlyCosmos" id="Q6FWD4">
    <property type="glycosylation" value="2 sites, No reported glycans"/>
</dbReference>
<dbReference type="EnsemblFungi" id="CAGL0D01056g-T">
    <property type="protein sequence ID" value="CAGL0D01056g-T-p1"/>
    <property type="gene ID" value="CAGL0D01056g"/>
</dbReference>
<dbReference type="KEGG" id="cgr:2887171"/>
<dbReference type="CGD" id="CAL0128363">
    <property type="gene designation" value="CAGL0D01056g"/>
</dbReference>
<dbReference type="VEuPathDB" id="FungiDB:CAGL0D01056g"/>
<dbReference type="eggNOG" id="ENOG502QTNE">
    <property type="taxonomic scope" value="Eukaryota"/>
</dbReference>
<dbReference type="HOGENOM" id="CLU_012596_3_0_1"/>
<dbReference type="InParanoid" id="Q6FWD4"/>
<dbReference type="OMA" id="PTMWWLA"/>
<dbReference type="Proteomes" id="UP000002428">
    <property type="component" value="Chromosome D"/>
</dbReference>
<dbReference type="GO" id="GO:0000329">
    <property type="term" value="C:fungal-type vacuole membrane"/>
    <property type="evidence" value="ECO:0007669"/>
    <property type="project" value="EnsemblFungi"/>
</dbReference>
<dbReference type="GO" id="GO:0022857">
    <property type="term" value="F:transmembrane transporter activity"/>
    <property type="evidence" value="ECO:0007669"/>
    <property type="project" value="InterPro"/>
</dbReference>
<dbReference type="CDD" id="cd17354">
    <property type="entry name" value="MFS_Mch1p_like"/>
    <property type="match status" value="1"/>
</dbReference>
<dbReference type="Gene3D" id="1.20.1250.20">
    <property type="entry name" value="MFS general substrate transporter like domains"/>
    <property type="match status" value="1"/>
</dbReference>
<dbReference type="InterPro" id="IPR011701">
    <property type="entry name" value="MFS"/>
</dbReference>
<dbReference type="InterPro" id="IPR036259">
    <property type="entry name" value="MFS_trans_sf"/>
</dbReference>
<dbReference type="PANTHER" id="PTHR21576:SF45">
    <property type="entry name" value="TRANSPORTER MCH1-RELATED"/>
    <property type="match status" value="1"/>
</dbReference>
<dbReference type="PANTHER" id="PTHR21576">
    <property type="entry name" value="UNCHARACTERIZED NODULIN-LIKE PROTEIN"/>
    <property type="match status" value="1"/>
</dbReference>
<dbReference type="Pfam" id="PF07690">
    <property type="entry name" value="MFS_1"/>
    <property type="match status" value="1"/>
</dbReference>
<dbReference type="SUPFAM" id="SSF103473">
    <property type="entry name" value="MFS general substrate transporter"/>
    <property type="match status" value="1"/>
</dbReference>
<proteinExistence type="inferred from homology"/>